<keyword id="KW-0520">NAD</keyword>
<keyword id="KW-0560">Oxidoreductase</keyword>
<keyword id="KW-1185">Reference proteome</keyword>
<keyword id="KW-0816">Tricarboxylic acid cycle</keyword>
<accession>B5EIU8</accession>
<protein>
    <recommendedName>
        <fullName evidence="1">Malate dehydrogenase</fullName>
        <ecNumber evidence="1">1.1.1.37</ecNumber>
    </recommendedName>
</protein>
<name>MDH_CITBB</name>
<gene>
    <name evidence="1" type="primary">mdh</name>
    <name type="ordered locus">Gbem_2900</name>
</gene>
<sequence>MARKKIALIGGGQIGGVLAQLAALRELGDVVMFDIVEGLPQGKMLDIAEVGSVDGFDCNLKGTNSYEDIKGADVVIVTAGLPRKPGMSRDDLIEVNSKIMTSVAEGIKANAPNAFVIVISNPLDAMVTLCQKITGFPYNRVIGQAGVLDSARFKTFIAWELGVSVKDVNAMTLGGHGDDMVPLVRYASVNGIPVMELLEKKYKDKAKAKEVMEAMVKRTRGAGGEVVALLKTGSAFYSPASSAIQMAESILKDQKRVLPTCAHLNGEFGVKGFYVGVPCVLGENGVEQILEFELDAEEQAMMDKSVAAVKELVGSMK</sequence>
<comment type="function">
    <text evidence="1">Catalyzes the reversible oxidation of malate to oxaloacetate.</text>
</comment>
<comment type="catalytic activity">
    <reaction evidence="1">
        <text>(S)-malate + NAD(+) = oxaloacetate + NADH + H(+)</text>
        <dbReference type="Rhea" id="RHEA:21432"/>
        <dbReference type="ChEBI" id="CHEBI:15378"/>
        <dbReference type="ChEBI" id="CHEBI:15589"/>
        <dbReference type="ChEBI" id="CHEBI:16452"/>
        <dbReference type="ChEBI" id="CHEBI:57540"/>
        <dbReference type="ChEBI" id="CHEBI:57945"/>
        <dbReference type="EC" id="1.1.1.37"/>
    </reaction>
</comment>
<comment type="similarity">
    <text evidence="1">Belongs to the LDH/MDH superfamily. MDH type 3 family.</text>
</comment>
<evidence type="ECO:0000255" key="1">
    <source>
        <dbReference type="HAMAP-Rule" id="MF_00487"/>
    </source>
</evidence>
<feature type="chain" id="PRO_1000126133" description="Malate dehydrogenase">
    <location>
        <begin position="1"/>
        <end position="317"/>
    </location>
</feature>
<feature type="active site" description="Proton acceptor" evidence="1">
    <location>
        <position position="176"/>
    </location>
</feature>
<feature type="binding site" evidence="1">
    <location>
        <begin position="10"/>
        <end position="15"/>
    </location>
    <ligand>
        <name>NAD(+)</name>
        <dbReference type="ChEBI" id="CHEBI:57540"/>
    </ligand>
</feature>
<feature type="binding site" evidence="1">
    <location>
        <position position="34"/>
    </location>
    <ligand>
        <name>NAD(+)</name>
        <dbReference type="ChEBI" id="CHEBI:57540"/>
    </ligand>
</feature>
<feature type="binding site" evidence="1">
    <location>
        <position position="83"/>
    </location>
    <ligand>
        <name>substrate</name>
    </ligand>
</feature>
<feature type="binding site" evidence="1">
    <location>
        <position position="89"/>
    </location>
    <ligand>
        <name>substrate</name>
    </ligand>
</feature>
<feature type="binding site" evidence="1">
    <location>
        <position position="96"/>
    </location>
    <ligand>
        <name>NAD(+)</name>
        <dbReference type="ChEBI" id="CHEBI:57540"/>
    </ligand>
</feature>
<feature type="binding site" evidence="1">
    <location>
        <begin position="119"/>
        <end position="121"/>
    </location>
    <ligand>
        <name>NAD(+)</name>
        <dbReference type="ChEBI" id="CHEBI:57540"/>
    </ligand>
</feature>
<feature type="binding site" evidence="1">
    <location>
        <position position="121"/>
    </location>
    <ligand>
        <name>substrate</name>
    </ligand>
</feature>
<feature type="binding site" evidence="1">
    <location>
        <position position="152"/>
    </location>
    <ligand>
        <name>substrate</name>
    </ligand>
</feature>
<proteinExistence type="inferred from homology"/>
<reference key="1">
    <citation type="submission" date="2008-07" db="EMBL/GenBank/DDBJ databases">
        <title>Complete sequence of Geobacter bemidjiensis BEM.</title>
        <authorList>
            <consortium name="US DOE Joint Genome Institute"/>
            <person name="Lucas S."/>
            <person name="Copeland A."/>
            <person name="Lapidus A."/>
            <person name="Glavina del Rio T."/>
            <person name="Dalin E."/>
            <person name="Tice H."/>
            <person name="Bruce D."/>
            <person name="Goodwin L."/>
            <person name="Pitluck S."/>
            <person name="Kiss H."/>
            <person name="Brettin T."/>
            <person name="Detter J.C."/>
            <person name="Han C."/>
            <person name="Kuske C.R."/>
            <person name="Schmutz J."/>
            <person name="Larimer F."/>
            <person name="Land M."/>
            <person name="Hauser L."/>
            <person name="Kyrpides N."/>
            <person name="Lykidis A."/>
            <person name="Lovley D."/>
            <person name="Richardson P."/>
        </authorList>
    </citation>
    <scope>NUCLEOTIDE SEQUENCE [LARGE SCALE GENOMIC DNA]</scope>
    <source>
        <strain>ATCC BAA-1014 / DSM 16622 / JCM 12645 / Bem</strain>
    </source>
</reference>
<dbReference type="EC" id="1.1.1.37" evidence="1"/>
<dbReference type="EMBL" id="CP001124">
    <property type="protein sequence ID" value="ACH39903.1"/>
    <property type="molecule type" value="Genomic_DNA"/>
</dbReference>
<dbReference type="RefSeq" id="WP_012531328.1">
    <property type="nucleotide sequence ID" value="NC_011146.1"/>
</dbReference>
<dbReference type="SMR" id="B5EIU8"/>
<dbReference type="STRING" id="404380.Gbem_2900"/>
<dbReference type="KEGG" id="gbm:Gbem_2900"/>
<dbReference type="eggNOG" id="COG0039">
    <property type="taxonomic scope" value="Bacteria"/>
</dbReference>
<dbReference type="HOGENOM" id="CLU_045401_2_1_7"/>
<dbReference type="OrthoDB" id="9802969at2"/>
<dbReference type="Proteomes" id="UP000008825">
    <property type="component" value="Chromosome"/>
</dbReference>
<dbReference type="GO" id="GO:0004459">
    <property type="term" value="F:L-lactate dehydrogenase activity"/>
    <property type="evidence" value="ECO:0007669"/>
    <property type="project" value="TreeGrafter"/>
</dbReference>
<dbReference type="GO" id="GO:0030060">
    <property type="term" value="F:L-malate dehydrogenase (NAD+) activity"/>
    <property type="evidence" value="ECO:0007669"/>
    <property type="project" value="UniProtKB-UniRule"/>
</dbReference>
<dbReference type="GO" id="GO:0006089">
    <property type="term" value="P:lactate metabolic process"/>
    <property type="evidence" value="ECO:0007669"/>
    <property type="project" value="TreeGrafter"/>
</dbReference>
<dbReference type="GO" id="GO:0006099">
    <property type="term" value="P:tricarboxylic acid cycle"/>
    <property type="evidence" value="ECO:0007669"/>
    <property type="project" value="UniProtKB-UniRule"/>
</dbReference>
<dbReference type="CDD" id="cd01339">
    <property type="entry name" value="LDH-like_MDH"/>
    <property type="match status" value="1"/>
</dbReference>
<dbReference type="FunFam" id="3.40.50.720:FF:000018">
    <property type="entry name" value="Malate dehydrogenase"/>
    <property type="match status" value="1"/>
</dbReference>
<dbReference type="FunFam" id="3.90.110.10:FF:000004">
    <property type="entry name" value="Malate dehydrogenase"/>
    <property type="match status" value="1"/>
</dbReference>
<dbReference type="Gene3D" id="3.90.110.10">
    <property type="entry name" value="Lactate dehydrogenase/glycoside hydrolase, family 4, C-terminal"/>
    <property type="match status" value="1"/>
</dbReference>
<dbReference type="Gene3D" id="3.40.50.720">
    <property type="entry name" value="NAD(P)-binding Rossmann-like Domain"/>
    <property type="match status" value="1"/>
</dbReference>
<dbReference type="HAMAP" id="MF_00487">
    <property type="entry name" value="Malate_dehydrog_3"/>
    <property type="match status" value="1"/>
</dbReference>
<dbReference type="InterPro" id="IPR001557">
    <property type="entry name" value="L-lactate/malate_DH"/>
</dbReference>
<dbReference type="InterPro" id="IPR022383">
    <property type="entry name" value="Lactate/malate_DH_C"/>
</dbReference>
<dbReference type="InterPro" id="IPR001236">
    <property type="entry name" value="Lactate/malate_DH_N"/>
</dbReference>
<dbReference type="InterPro" id="IPR015955">
    <property type="entry name" value="Lactate_DH/Glyco_Ohase_4_C"/>
</dbReference>
<dbReference type="InterPro" id="IPR011275">
    <property type="entry name" value="Malate_DH_type3"/>
</dbReference>
<dbReference type="InterPro" id="IPR036291">
    <property type="entry name" value="NAD(P)-bd_dom_sf"/>
</dbReference>
<dbReference type="NCBIfam" id="TIGR01763">
    <property type="entry name" value="MalateDH_bact"/>
    <property type="match status" value="1"/>
</dbReference>
<dbReference type="NCBIfam" id="NF004863">
    <property type="entry name" value="PRK06223.1"/>
    <property type="match status" value="1"/>
</dbReference>
<dbReference type="PANTHER" id="PTHR43128">
    <property type="entry name" value="L-2-HYDROXYCARBOXYLATE DEHYDROGENASE (NAD(P)(+))"/>
    <property type="match status" value="1"/>
</dbReference>
<dbReference type="PANTHER" id="PTHR43128:SF16">
    <property type="entry name" value="L-LACTATE DEHYDROGENASE"/>
    <property type="match status" value="1"/>
</dbReference>
<dbReference type="Pfam" id="PF02866">
    <property type="entry name" value="Ldh_1_C"/>
    <property type="match status" value="1"/>
</dbReference>
<dbReference type="Pfam" id="PF00056">
    <property type="entry name" value="Ldh_1_N"/>
    <property type="match status" value="1"/>
</dbReference>
<dbReference type="PIRSF" id="PIRSF000102">
    <property type="entry name" value="Lac_mal_DH"/>
    <property type="match status" value="1"/>
</dbReference>
<dbReference type="PRINTS" id="PR00086">
    <property type="entry name" value="LLDHDRGNASE"/>
</dbReference>
<dbReference type="SUPFAM" id="SSF56327">
    <property type="entry name" value="LDH C-terminal domain-like"/>
    <property type="match status" value="1"/>
</dbReference>
<dbReference type="SUPFAM" id="SSF51735">
    <property type="entry name" value="NAD(P)-binding Rossmann-fold domains"/>
    <property type="match status" value="1"/>
</dbReference>
<organism>
    <name type="scientific">Citrifermentans bemidjiense (strain ATCC BAA-1014 / DSM 16622 / JCM 12645 / Bem)</name>
    <name type="common">Geobacter bemidjiensis</name>
    <dbReference type="NCBI Taxonomy" id="404380"/>
    <lineage>
        <taxon>Bacteria</taxon>
        <taxon>Pseudomonadati</taxon>
        <taxon>Thermodesulfobacteriota</taxon>
        <taxon>Desulfuromonadia</taxon>
        <taxon>Geobacterales</taxon>
        <taxon>Geobacteraceae</taxon>
        <taxon>Citrifermentans</taxon>
    </lineage>
</organism>